<proteinExistence type="inferred from homology"/>
<reference key="1">
    <citation type="submission" date="2006-12" db="EMBL/GenBank/DDBJ databases">
        <title>Complete sequence of Shewanella sp. W3-18-1.</title>
        <authorList>
            <consortium name="US DOE Joint Genome Institute"/>
            <person name="Copeland A."/>
            <person name="Lucas S."/>
            <person name="Lapidus A."/>
            <person name="Barry K."/>
            <person name="Detter J.C."/>
            <person name="Glavina del Rio T."/>
            <person name="Hammon N."/>
            <person name="Israni S."/>
            <person name="Dalin E."/>
            <person name="Tice H."/>
            <person name="Pitluck S."/>
            <person name="Chain P."/>
            <person name="Malfatti S."/>
            <person name="Shin M."/>
            <person name="Vergez L."/>
            <person name="Schmutz J."/>
            <person name="Larimer F."/>
            <person name="Land M."/>
            <person name="Hauser L."/>
            <person name="Kyrpides N."/>
            <person name="Lykidis A."/>
            <person name="Tiedje J."/>
            <person name="Richardson P."/>
        </authorList>
    </citation>
    <scope>NUCLEOTIDE SEQUENCE [LARGE SCALE GENOMIC DNA]</scope>
    <source>
        <strain>W3-18-1</strain>
    </source>
</reference>
<sequence length="218" mass="25059">MEPGFWHEKWYKQQIGFHQQDINPFLVQYWQRLALPAGAKVFVPLCGKSLDMCFLAEQGHQVIGCELNELAVQQFFSDNQLEMTQTVEGEHQHYQTEQVSLYQGDIFTLPKRITQDVTAFYDRAALIAWPEEMRAQYAKQLANLLPSGSLGLLVTLDYPQETLNGPPFAVSPNWIEAHLTDDFEIQALACQDVLADNPRFVKKEVPWLNEAAYLLKRK</sequence>
<name>TPMT_SHESW</name>
<feature type="chain" id="PRO_1000047226" description="Thiopurine S-methyltransferase">
    <location>
        <begin position="1"/>
        <end position="218"/>
    </location>
</feature>
<feature type="binding site" evidence="1">
    <location>
        <position position="10"/>
    </location>
    <ligand>
        <name>S-adenosyl-L-methionine</name>
        <dbReference type="ChEBI" id="CHEBI:59789"/>
    </ligand>
</feature>
<feature type="binding site" evidence="1">
    <location>
        <position position="45"/>
    </location>
    <ligand>
        <name>S-adenosyl-L-methionine</name>
        <dbReference type="ChEBI" id="CHEBI:59789"/>
    </ligand>
</feature>
<feature type="binding site" evidence="1">
    <location>
        <position position="66"/>
    </location>
    <ligand>
        <name>S-adenosyl-L-methionine</name>
        <dbReference type="ChEBI" id="CHEBI:59789"/>
    </ligand>
</feature>
<feature type="binding site" evidence="1">
    <location>
        <position position="123"/>
    </location>
    <ligand>
        <name>S-adenosyl-L-methionine</name>
        <dbReference type="ChEBI" id="CHEBI:59789"/>
    </ligand>
</feature>
<protein>
    <recommendedName>
        <fullName evidence="1">Thiopurine S-methyltransferase</fullName>
        <ecNumber evidence="1">2.1.1.67</ecNumber>
    </recommendedName>
    <alternativeName>
        <fullName evidence="1">Thiopurine methyltransferase</fullName>
    </alternativeName>
</protein>
<evidence type="ECO:0000255" key="1">
    <source>
        <dbReference type="HAMAP-Rule" id="MF_00812"/>
    </source>
</evidence>
<gene>
    <name evidence="1" type="primary">tpm</name>
    <name type="ordered locus">Sputw3181_0645</name>
</gene>
<keyword id="KW-0963">Cytoplasm</keyword>
<keyword id="KW-0489">Methyltransferase</keyword>
<keyword id="KW-0949">S-adenosyl-L-methionine</keyword>
<keyword id="KW-0808">Transferase</keyword>
<accession>A1RFQ1</accession>
<organism>
    <name type="scientific">Shewanella sp. (strain W3-18-1)</name>
    <dbReference type="NCBI Taxonomy" id="351745"/>
    <lineage>
        <taxon>Bacteria</taxon>
        <taxon>Pseudomonadati</taxon>
        <taxon>Pseudomonadota</taxon>
        <taxon>Gammaproteobacteria</taxon>
        <taxon>Alteromonadales</taxon>
        <taxon>Shewanellaceae</taxon>
        <taxon>Shewanella</taxon>
    </lineage>
</organism>
<comment type="catalytic activity">
    <reaction evidence="1">
        <text>S-adenosyl-L-methionine + a thiopurine = S-adenosyl-L-homocysteine + a thiopurine S-methylether.</text>
        <dbReference type="EC" id="2.1.1.67"/>
    </reaction>
</comment>
<comment type="subcellular location">
    <subcellularLocation>
        <location evidence="1">Cytoplasm</location>
    </subcellularLocation>
</comment>
<comment type="similarity">
    <text evidence="1">Belongs to the class I-like SAM-binding methyltransferase superfamily. TPMT family.</text>
</comment>
<dbReference type="EC" id="2.1.1.67" evidence="1"/>
<dbReference type="EMBL" id="CP000503">
    <property type="protein sequence ID" value="ABM23496.1"/>
    <property type="molecule type" value="Genomic_DNA"/>
</dbReference>
<dbReference type="RefSeq" id="WP_011788026.1">
    <property type="nucleotide sequence ID" value="NC_008750.1"/>
</dbReference>
<dbReference type="SMR" id="A1RFQ1"/>
<dbReference type="KEGG" id="shw:Sputw3181_0645"/>
<dbReference type="HOGENOM" id="CLU_085515_1_0_6"/>
<dbReference type="Proteomes" id="UP000002597">
    <property type="component" value="Chromosome"/>
</dbReference>
<dbReference type="GO" id="GO:0005737">
    <property type="term" value="C:cytoplasm"/>
    <property type="evidence" value="ECO:0007669"/>
    <property type="project" value="UniProtKB-SubCell"/>
</dbReference>
<dbReference type="GO" id="GO:0008119">
    <property type="term" value="F:thiopurine S-methyltransferase activity"/>
    <property type="evidence" value="ECO:0007669"/>
    <property type="project" value="UniProtKB-UniRule"/>
</dbReference>
<dbReference type="GO" id="GO:0032259">
    <property type="term" value="P:methylation"/>
    <property type="evidence" value="ECO:0007669"/>
    <property type="project" value="UniProtKB-KW"/>
</dbReference>
<dbReference type="GO" id="GO:0010038">
    <property type="term" value="P:response to metal ion"/>
    <property type="evidence" value="ECO:0007669"/>
    <property type="project" value="InterPro"/>
</dbReference>
<dbReference type="FunFam" id="3.40.50.150:FF:000101">
    <property type="entry name" value="Thiopurine S-methyltransferase"/>
    <property type="match status" value="1"/>
</dbReference>
<dbReference type="Gene3D" id="3.40.50.150">
    <property type="entry name" value="Vaccinia Virus protein VP39"/>
    <property type="match status" value="1"/>
</dbReference>
<dbReference type="HAMAP" id="MF_00812">
    <property type="entry name" value="Thiopur_methtran"/>
    <property type="match status" value="1"/>
</dbReference>
<dbReference type="InterPro" id="IPR029063">
    <property type="entry name" value="SAM-dependent_MTases_sf"/>
</dbReference>
<dbReference type="InterPro" id="IPR022474">
    <property type="entry name" value="Thiopur_S-MeTfrase_Se/Te_detox"/>
</dbReference>
<dbReference type="InterPro" id="IPR025835">
    <property type="entry name" value="Thiopurine_S-MeTrfase"/>
</dbReference>
<dbReference type="InterPro" id="IPR008854">
    <property type="entry name" value="TPMT"/>
</dbReference>
<dbReference type="NCBIfam" id="NF009732">
    <property type="entry name" value="PRK13255.1"/>
    <property type="match status" value="1"/>
</dbReference>
<dbReference type="NCBIfam" id="TIGR03840">
    <property type="entry name" value="TMPT_Se_Te"/>
    <property type="match status" value="1"/>
</dbReference>
<dbReference type="PANTHER" id="PTHR10259">
    <property type="entry name" value="THIOPURINE S-METHYLTRANSFERASE"/>
    <property type="match status" value="1"/>
</dbReference>
<dbReference type="PANTHER" id="PTHR10259:SF11">
    <property type="entry name" value="THIOPURINE S-METHYLTRANSFERASE"/>
    <property type="match status" value="1"/>
</dbReference>
<dbReference type="Pfam" id="PF05724">
    <property type="entry name" value="TPMT"/>
    <property type="match status" value="1"/>
</dbReference>
<dbReference type="PIRSF" id="PIRSF023956">
    <property type="entry name" value="Thiopurine_S-methyltransferase"/>
    <property type="match status" value="1"/>
</dbReference>
<dbReference type="SUPFAM" id="SSF53335">
    <property type="entry name" value="S-adenosyl-L-methionine-dependent methyltransferases"/>
    <property type="match status" value="1"/>
</dbReference>
<dbReference type="PROSITE" id="PS51585">
    <property type="entry name" value="SAM_MT_TPMT"/>
    <property type="match status" value="1"/>
</dbReference>